<keyword id="KW-0025">Alternative splicing</keyword>
<keyword id="KW-0963">Cytoplasm</keyword>
<keyword id="KW-0539">Nucleus</keyword>
<keyword id="KW-0597">Phosphoprotein</keyword>
<keyword id="KW-0650">Protein phosphatase inhibitor</keyword>
<keyword id="KW-1185">Reference proteome</keyword>
<protein>
    <recommendedName>
        <fullName evidence="5">Protein phosphatase inhibitor 2</fullName>
        <shortName evidence="4">AtI-2</shortName>
        <shortName evidence="5">IPP-2</shortName>
    </recommendedName>
</protein>
<accession>Q9LTK0</accession>
<name>IPP2_ARATH</name>
<feature type="chain" id="PRO_0000442225" description="Protein phosphatase inhibitor 2">
    <location>
        <begin position="1"/>
        <end position="191"/>
    </location>
</feature>
<feature type="region of interest" description="Disordered" evidence="1">
    <location>
        <begin position="20"/>
        <end position="52"/>
    </location>
</feature>
<feature type="region of interest" description="Disordered" evidence="1">
    <location>
        <begin position="67"/>
        <end position="191"/>
    </location>
</feature>
<feature type="compositionally biased region" description="Basic and acidic residues" evidence="1">
    <location>
        <begin position="20"/>
        <end position="31"/>
    </location>
</feature>
<feature type="compositionally biased region" description="Acidic residues" evidence="1">
    <location>
        <begin position="93"/>
        <end position="109"/>
    </location>
</feature>
<feature type="compositionally biased region" description="Basic and acidic residues" evidence="1">
    <location>
        <begin position="114"/>
        <end position="136"/>
    </location>
</feature>
<feature type="modified residue" description="Phosphoserine" evidence="8">
    <location>
        <position position="45"/>
    </location>
</feature>
<feature type="modified residue" description="Phosphoserine" evidence="8">
    <location>
        <position position="47"/>
    </location>
</feature>
<feature type="mutagenesis site" description="Loss of binding to protein-phosphatase 1 (PP1); when associated with A-11." evidence="2">
    <original>V</original>
    <variation>A</variation>
    <location>
        <position position="9"/>
    </location>
</feature>
<feature type="mutagenesis site" description="Loss of binding to protein-phosphatase 1 (PP1); when associated with A-9." evidence="2">
    <original>W</original>
    <variation>A</variation>
    <location>
        <position position="11"/>
    </location>
</feature>
<sequence>MTEPKRGRVQWDEANIVEIESNKPVRQKITEPKTPYHPMMDDDGSLSPRGRAFDECVDDMQRAEELRNVLNDAAASSSRNSSQGSGGGGWSSSDEEEEEADPMDQDEEGSGSGKNERFNAHRKAHYDEFRKVKELRSSGSFYEEEEEEDDGAKGSKSETTTNSRHTKGGNKELDATKTVSGTSSSSSPELI</sequence>
<gene>
    <name evidence="4" type="primary">I-2</name>
    <name evidence="6" type="ordered locus">At5g52200</name>
    <name evidence="7" type="ORF">F17P19.10</name>
</gene>
<organism>
    <name type="scientific">Arabidopsis thaliana</name>
    <name type="common">Mouse-ear cress</name>
    <dbReference type="NCBI Taxonomy" id="3702"/>
    <lineage>
        <taxon>Eukaryota</taxon>
        <taxon>Viridiplantae</taxon>
        <taxon>Streptophyta</taxon>
        <taxon>Embryophyta</taxon>
        <taxon>Tracheophyta</taxon>
        <taxon>Spermatophyta</taxon>
        <taxon>Magnoliopsida</taxon>
        <taxon>eudicotyledons</taxon>
        <taxon>Gunneridae</taxon>
        <taxon>Pentapetalae</taxon>
        <taxon>rosids</taxon>
        <taxon>malvids</taxon>
        <taxon>Brassicales</taxon>
        <taxon>Brassicaceae</taxon>
        <taxon>Camelineae</taxon>
        <taxon>Arabidopsis</taxon>
    </lineage>
</organism>
<dbReference type="EMBL" id="AB025603">
    <property type="protein sequence ID" value="BAA97463.1"/>
    <property type="molecule type" value="Genomic_DNA"/>
</dbReference>
<dbReference type="EMBL" id="CP002688">
    <property type="protein sequence ID" value="AED96182.1"/>
    <property type="molecule type" value="Genomic_DNA"/>
</dbReference>
<dbReference type="EMBL" id="AY050347">
    <property type="protein sequence ID" value="AAK91364.1"/>
    <property type="molecule type" value="mRNA"/>
</dbReference>
<dbReference type="EMBL" id="AY116938">
    <property type="protein sequence ID" value="AAM51572.1"/>
    <property type="molecule type" value="mRNA"/>
</dbReference>
<dbReference type="RefSeq" id="NP_568768.1">
    <molecule id="Q9LTK0-1"/>
    <property type="nucleotide sequence ID" value="NM_124599.5"/>
</dbReference>
<dbReference type="FunCoup" id="Q9LTK0">
    <property type="interactions" value="446"/>
</dbReference>
<dbReference type="IntAct" id="Q9LTK0">
    <property type="interactions" value="1"/>
</dbReference>
<dbReference type="STRING" id="3702.Q9LTK0"/>
<dbReference type="iPTMnet" id="Q9LTK0"/>
<dbReference type="MetOSite" id="Q9LTK0"/>
<dbReference type="PaxDb" id="3702-AT5G52200.2"/>
<dbReference type="ProteomicsDB" id="247285">
    <molecule id="Q9LTK0-1"/>
</dbReference>
<dbReference type="EnsemblPlants" id="AT5G52200.1">
    <molecule id="Q9LTK0-1"/>
    <property type="protein sequence ID" value="AT5G52200.1"/>
    <property type="gene ID" value="AT5G52200"/>
</dbReference>
<dbReference type="GeneID" id="835296"/>
<dbReference type="Gramene" id="AT5G52200.1">
    <molecule id="Q9LTK0-1"/>
    <property type="protein sequence ID" value="AT5G52200.1"/>
    <property type="gene ID" value="AT5G52200"/>
</dbReference>
<dbReference type="KEGG" id="ath:AT5G52200"/>
<dbReference type="Araport" id="AT5G52200"/>
<dbReference type="TAIR" id="AT5G52200">
    <property type="gene designation" value="I-2"/>
</dbReference>
<dbReference type="eggNOG" id="ENOG502RYGC">
    <property type="taxonomic scope" value="Eukaryota"/>
</dbReference>
<dbReference type="HOGENOM" id="CLU_099603_1_1_1"/>
<dbReference type="InParanoid" id="Q9LTK0"/>
<dbReference type="OMA" id="KKPAGCD"/>
<dbReference type="PhylomeDB" id="Q9LTK0"/>
<dbReference type="PRO" id="PR:Q9LTK0"/>
<dbReference type="Proteomes" id="UP000006548">
    <property type="component" value="Chromosome 5"/>
</dbReference>
<dbReference type="ExpressionAtlas" id="Q9LTK0">
    <property type="expression patterns" value="baseline and differential"/>
</dbReference>
<dbReference type="GO" id="GO:0005737">
    <property type="term" value="C:cytoplasm"/>
    <property type="evidence" value="ECO:0007669"/>
    <property type="project" value="UniProtKB-SubCell"/>
</dbReference>
<dbReference type="GO" id="GO:0005634">
    <property type="term" value="C:nucleus"/>
    <property type="evidence" value="ECO:0007669"/>
    <property type="project" value="UniProtKB-SubCell"/>
</dbReference>
<dbReference type="GO" id="GO:0004864">
    <property type="term" value="F:protein phosphatase inhibitor activity"/>
    <property type="evidence" value="ECO:0007669"/>
    <property type="project" value="UniProtKB-KW"/>
</dbReference>
<dbReference type="GO" id="GO:0009966">
    <property type="term" value="P:regulation of signal transduction"/>
    <property type="evidence" value="ECO:0007669"/>
    <property type="project" value="InterPro"/>
</dbReference>
<dbReference type="InterPro" id="IPR007062">
    <property type="entry name" value="PPI-2"/>
</dbReference>
<dbReference type="PANTHER" id="PTHR12398:SF20">
    <property type="entry name" value="PROTEIN PHOSPHATASE 1 REGULATORY INHIBITOR SUBUNIT 2"/>
    <property type="match status" value="1"/>
</dbReference>
<dbReference type="PANTHER" id="PTHR12398">
    <property type="entry name" value="PROTEIN PHOSPHATASE INHIBITOR"/>
    <property type="match status" value="1"/>
</dbReference>
<dbReference type="Pfam" id="PF04979">
    <property type="entry name" value="IPP-2"/>
    <property type="match status" value="1"/>
</dbReference>
<proteinExistence type="evidence at protein level"/>
<comment type="function">
    <text evidence="2 3">Inhibitor of protein-phosphatase 1 (PP1). Binds to and inhibits PP1 activity (PubMed:21222654, PubMed:26943172). Acts as negative regulator of abscisic acid (ABA) signaling. Enhances the inhibition of SRK2E/SNRK2.6 by TOPP1. May promote the interaction between TOPP1 and the ABA receptor PYL11 (PubMed:26943172).</text>
</comment>
<comment type="subunit">
    <text evidence="2 3">Interacts with protein phosphatase 1 (PubMed:21222654). Interacts with TOPP1, SRK2D/SNRK2.2, SRK2I/SNRK2.3, SRK2E/SNRK2.6, SRK2C/SNRK2.8 and PYL11 (PubMed:26943172).</text>
</comment>
<comment type="subcellular location">
    <subcellularLocation>
        <location evidence="2">Nucleus</location>
    </subcellularLocation>
    <subcellularLocation>
        <location evidence="2">Cytoplasm</location>
    </subcellularLocation>
    <text evidence="2">Predominantly localizes in the nucleus.</text>
</comment>
<comment type="alternative products">
    <event type="alternative splicing"/>
    <isoform>
        <id>Q9LTK0-1</id>
        <name>1</name>
        <sequence type="displayed"/>
    </isoform>
    <text evidence="5">A number of isoform are produced. According to EST sequences.</text>
</comment>
<comment type="tissue specificity">
    <text evidence="3">Expressed in roots, cotyledons, leaves, flowers and siliques.</text>
</comment>
<comment type="PTM">
    <text evidence="2">Phosphorylated in vivo.</text>
</comment>
<comment type="disruption phenotype">
    <text evidence="3">No visible phenotype under normal growth conditions, but mutant seedlings exhibit hypersensitivity to abscisic acid (ABA) or salt treatments.</text>
</comment>
<evidence type="ECO:0000256" key="1">
    <source>
        <dbReference type="SAM" id="MobiDB-lite"/>
    </source>
</evidence>
<evidence type="ECO:0000269" key="2">
    <source>
    </source>
</evidence>
<evidence type="ECO:0000269" key="3">
    <source>
    </source>
</evidence>
<evidence type="ECO:0000303" key="4">
    <source>
    </source>
</evidence>
<evidence type="ECO:0000305" key="5"/>
<evidence type="ECO:0000312" key="6">
    <source>
        <dbReference type="Araport" id="AT5G52200"/>
    </source>
</evidence>
<evidence type="ECO:0000312" key="7">
    <source>
        <dbReference type="EMBL" id="AED96182.1"/>
    </source>
</evidence>
<evidence type="ECO:0007744" key="8">
    <source>
    </source>
</evidence>
<reference key="1">
    <citation type="submission" date="1999-04" db="EMBL/GenBank/DDBJ databases">
        <title>Structural analysis of Arabidopsis thaliana chromosome 5. XI.</title>
        <authorList>
            <person name="Kaneko T."/>
            <person name="Katoh T."/>
            <person name="Asamizu E."/>
            <person name="Sato S."/>
            <person name="Nakamura Y."/>
            <person name="Kotani H."/>
            <person name="Tabata S."/>
        </authorList>
    </citation>
    <scope>NUCLEOTIDE SEQUENCE [LARGE SCALE GENOMIC DNA]</scope>
    <source>
        <strain>cv. Columbia</strain>
    </source>
</reference>
<reference key="2">
    <citation type="journal article" date="2017" name="Plant J.">
        <title>Araport11: a complete reannotation of the Arabidopsis thaliana reference genome.</title>
        <authorList>
            <person name="Cheng C.Y."/>
            <person name="Krishnakumar V."/>
            <person name="Chan A.P."/>
            <person name="Thibaud-Nissen F."/>
            <person name="Schobel S."/>
            <person name="Town C.D."/>
        </authorList>
    </citation>
    <scope>GENOME REANNOTATION</scope>
    <source>
        <strain>cv. Columbia</strain>
    </source>
</reference>
<reference key="3">
    <citation type="journal article" date="2003" name="Science">
        <title>Empirical analysis of transcriptional activity in the Arabidopsis genome.</title>
        <authorList>
            <person name="Yamada K."/>
            <person name="Lim J."/>
            <person name="Dale J.M."/>
            <person name="Chen H."/>
            <person name="Shinn P."/>
            <person name="Palm C.J."/>
            <person name="Southwick A.M."/>
            <person name="Wu H.C."/>
            <person name="Kim C.J."/>
            <person name="Nguyen M."/>
            <person name="Pham P.K."/>
            <person name="Cheuk R.F."/>
            <person name="Karlin-Newmann G."/>
            <person name="Liu S.X."/>
            <person name="Lam B."/>
            <person name="Sakano H."/>
            <person name="Wu T."/>
            <person name="Yu G."/>
            <person name="Miranda M."/>
            <person name="Quach H.L."/>
            <person name="Tripp M."/>
            <person name="Chang C.H."/>
            <person name="Lee J.M."/>
            <person name="Toriumi M.J."/>
            <person name="Chan M.M."/>
            <person name="Tang C.C."/>
            <person name="Onodera C.S."/>
            <person name="Deng J.M."/>
            <person name="Akiyama K."/>
            <person name="Ansari Y."/>
            <person name="Arakawa T."/>
            <person name="Banh J."/>
            <person name="Banno F."/>
            <person name="Bowser L."/>
            <person name="Brooks S.Y."/>
            <person name="Carninci P."/>
            <person name="Chao Q."/>
            <person name="Choy N."/>
            <person name="Enju A."/>
            <person name="Goldsmith A.D."/>
            <person name="Gurjal M."/>
            <person name="Hansen N.F."/>
            <person name="Hayashizaki Y."/>
            <person name="Johnson-Hopson C."/>
            <person name="Hsuan V.W."/>
            <person name="Iida K."/>
            <person name="Karnes M."/>
            <person name="Khan S."/>
            <person name="Koesema E."/>
            <person name="Ishida J."/>
            <person name="Jiang P.X."/>
            <person name="Jones T."/>
            <person name="Kawai J."/>
            <person name="Kamiya A."/>
            <person name="Meyers C."/>
            <person name="Nakajima M."/>
            <person name="Narusaka M."/>
            <person name="Seki M."/>
            <person name="Sakurai T."/>
            <person name="Satou M."/>
            <person name="Tamse R."/>
            <person name="Vaysberg M."/>
            <person name="Wallender E.K."/>
            <person name="Wong C."/>
            <person name="Yamamura Y."/>
            <person name="Yuan S."/>
            <person name="Shinozaki K."/>
            <person name="Davis R.W."/>
            <person name="Theologis A."/>
            <person name="Ecker J.R."/>
        </authorList>
    </citation>
    <scope>NUCLEOTIDE SEQUENCE [LARGE SCALE MRNA]</scope>
    <source>
        <strain>cv. Columbia</strain>
    </source>
</reference>
<reference key="4">
    <citation type="journal article" date="2009" name="J. Proteomics">
        <title>Phosphoproteomic analysis of nuclei-enriched fractions from Arabidopsis thaliana.</title>
        <authorList>
            <person name="Jones A.M.E."/>
            <person name="MacLean D."/>
            <person name="Studholme D.J."/>
            <person name="Serna-Sanz A."/>
            <person name="Andreasson E."/>
            <person name="Rathjen J.P."/>
            <person name="Peck S.C."/>
        </authorList>
    </citation>
    <scope>IDENTIFICATION BY MASS SPECTROMETRY [LARGE SCALE ANALYSIS]</scope>
    <source>
        <strain>cv. Columbia</strain>
    </source>
</reference>
<reference key="5">
    <citation type="journal article" date="2009" name="Plant Physiol.">
        <title>Large-scale Arabidopsis phosphoproteome profiling reveals novel chloroplast kinase substrates and phosphorylation networks.</title>
        <authorList>
            <person name="Reiland S."/>
            <person name="Messerli G."/>
            <person name="Baerenfaller K."/>
            <person name="Gerrits B."/>
            <person name="Endler A."/>
            <person name="Grossmann J."/>
            <person name="Gruissem W."/>
            <person name="Baginsky S."/>
        </authorList>
    </citation>
    <scope>PHOSPHORYLATION [LARGE SCALE ANALYSIS] AT SER-45 AND SER-47</scope>
    <scope>IDENTIFICATION BY MASS SPECTROMETRY [LARGE SCALE ANALYSIS]</scope>
</reference>
<reference key="6">
    <citation type="journal article" date="2011" name="Biochem. J.">
        <title>Identification and characterization of AtI-2, an Arabidopsis homologue of an ancient protein phosphatase 1 (PP1) regulatory subunit.</title>
        <authorList>
            <person name="Templeton G.W."/>
            <person name="Nimick M."/>
            <person name="Morrice N."/>
            <person name="Campbell D."/>
            <person name="Goudreault M."/>
            <person name="Gingras A.C."/>
            <person name="Takemiya A."/>
            <person name="Shimazaki K."/>
            <person name="Moorhead G.B."/>
        </authorList>
    </citation>
    <scope>IDENTIFICATION BY MASS SPECTROMETRY</scope>
    <scope>FUNCTION</scope>
    <scope>INTERACTION WITH PROTEIN PHOSPHATASE 1</scope>
    <scope>SUBCELLULAR LOCATION</scope>
    <scope>PHOSPHORYLATION</scope>
    <scope>MUTAGENESIS OF VAL-9 AND TRP-11</scope>
</reference>
<reference key="7">
    <citation type="journal article" date="2016" name="PLoS Genet.">
        <title>Type one protein phosphatase 1 and its regulatory protein inhibitor 2 negatively regulate ABA signaling.</title>
        <authorList>
            <person name="Hou Y.J."/>
            <person name="Zhu Y."/>
            <person name="Wang P."/>
            <person name="Zhao Y."/>
            <person name="Xie S."/>
            <person name="Batelli G."/>
            <person name="Wang B."/>
            <person name="Duan C.G."/>
            <person name="Wang X."/>
            <person name="Xing L."/>
            <person name="Lei M."/>
            <person name="Yan J."/>
            <person name="Zhu X."/>
            <person name="Zhu J.K."/>
        </authorList>
    </citation>
    <scope>FUNCTION</scope>
    <scope>INTERACTION WITH TOPP1; SRK2D/SNRK2.2; SRK2I/SNRK2.3; SRK2E/SNRK2.6; SRK2C/SNRK2.8 AND PYL11</scope>
    <scope>TISSUE SPECIFICITY</scope>
    <scope>DISRUPTION PHENOTYPE</scope>
</reference>